<keyword id="KW-0067">ATP-binding</keyword>
<keyword id="KW-0143">Chaperone</keyword>
<keyword id="KW-0963">Cytoplasm</keyword>
<keyword id="KW-0547">Nucleotide-binding</keyword>
<organism>
    <name type="scientific">Bacillus anthracis (strain A0248)</name>
    <dbReference type="NCBI Taxonomy" id="592021"/>
    <lineage>
        <taxon>Bacteria</taxon>
        <taxon>Bacillati</taxon>
        <taxon>Bacillota</taxon>
        <taxon>Bacilli</taxon>
        <taxon>Bacillales</taxon>
        <taxon>Bacillaceae</taxon>
        <taxon>Bacillus</taxon>
        <taxon>Bacillus cereus group</taxon>
    </lineage>
</organism>
<sequence length="463" mass="52213">MHLHFTPRQIVEKLDQYIIGQKDAKKAVAVALRNRYRRSKLAENLRDEIAPKNILMIGPTGVGKTEVARRMAKLVGAPFIKVEATKFTEVGYVGRDVESMVRDLVETSVRIVKEEMVVKVQDKAEEQANQRLVEILVPSPEKQSGFKNPLEMLFGGTQNSNQTTDSQEDVEIEKKRQDVERKLAAGLLEDEIVSIEVTEQQSSMFDMLQGTGMEQMGMNFQDALGSFMPKKTKKRKLSVKEARKVLTNEEAQRLIDMDEVTQEAVYRAEQLGIIFIDEIDKIAGKQSNSVDVSREGVQRDILPIVEGSNVATKYGSVKTDYILFVAAGAFHMSKPSDLIPELQGRFPIRVELTKLSTDDFVKILIEPDNALIKQYMALLATEGIEIEFSDEAIRKIAEIAYQVNQDTDNIGARRLHTIMEKLLEDLSFEASEITLEKITITPQYVEEKLATIAKNKDVSQFIL</sequence>
<protein>
    <recommendedName>
        <fullName evidence="1">ATP-dependent protease ATPase subunit HslU</fullName>
    </recommendedName>
    <alternativeName>
        <fullName evidence="1">Unfoldase HslU</fullName>
    </alternativeName>
</protein>
<feature type="chain" id="PRO_1000125425" description="ATP-dependent protease ATPase subunit HslU">
    <location>
        <begin position="1"/>
        <end position="463"/>
    </location>
</feature>
<feature type="binding site" evidence="1">
    <location>
        <position position="19"/>
    </location>
    <ligand>
        <name>ATP</name>
        <dbReference type="ChEBI" id="CHEBI:30616"/>
    </ligand>
</feature>
<feature type="binding site" evidence="1">
    <location>
        <begin position="61"/>
        <end position="66"/>
    </location>
    <ligand>
        <name>ATP</name>
        <dbReference type="ChEBI" id="CHEBI:30616"/>
    </ligand>
</feature>
<feature type="binding site" evidence="1">
    <location>
        <position position="277"/>
    </location>
    <ligand>
        <name>ATP</name>
        <dbReference type="ChEBI" id="CHEBI:30616"/>
    </ligand>
</feature>
<feature type="binding site" evidence="1">
    <location>
        <position position="341"/>
    </location>
    <ligand>
        <name>ATP</name>
        <dbReference type="ChEBI" id="CHEBI:30616"/>
    </ligand>
</feature>
<feature type="binding site" evidence="1">
    <location>
        <position position="413"/>
    </location>
    <ligand>
        <name>ATP</name>
        <dbReference type="ChEBI" id="CHEBI:30616"/>
    </ligand>
</feature>
<reference key="1">
    <citation type="submission" date="2009-04" db="EMBL/GenBank/DDBJ databases">
        <title>Genome sequence of Bacillus anthracis A0248.</title>
        <authorList>
            <person name="Dodson R.J."/>
            <person name="Munk A.C."/>
            <person name="Bruce D."/>
            <person name="Detter C."/>
            <person name="Tapia R."/>
            <person name="Sutton G."/>
            <person name="Sims D."/>
            <person name="Brettin T."/>
        </authorList>
    </citation>
    <scope>NUCLEOTIDE SEQUENCE [LARGE SCALE GENOMIC DNA]</scope>
    <source>
        <strain>A0248</strain>
    </source>
</reference>
<comment type="function">
    <text evidence="1">ATPase subunit of a proteasome-like degradation complex; this subunit has chaperone activity. The binding of ATP and its subsequent hydrolysis by HslU are essential for unfolding of protein substrates subsequently hydrolyzed by HslV. HslU recognizes the N-terminal part of its protein substrates and unfolds these before they are guided to HslV for hydrolysis.</text>
</comment>
<comment type="subunit">
    <text evidence="1">A double ring-shaped homohexamer of HslV is capped on each side by a ring-shaped HslU homohexamer. The assembly of the HslU/HslV complex is dependent on binding of ATP.</text>
</comment>
<comment type="subcellular location">
    <subcellularLocation>
        <location evidence="1">Cytoplasm</location>
    </subcellularLocation>
</comment>
<comment type="similarity">
    <text evidence="1">Belongs to the ClpX chaperone family. HslU subfamily.</text>
</comment>
<name>HSLU_BACAA</name>
<accession>C3P5N1</accession>
<evidence type="ECO:0000255" key="1">
    <source>
        <dbReference type="HAMAP-Rule" id="MF_00249"/>
    </source>
</evidence>
<dbReference type="EMBL" id="CP001598">
    <property type="protein sequence ID" value="ACQ50458.1"/>
    <property type="molecule type" value="Genomic_DNA"/>
</dbReference>
<dbReference type="RefSeq" id="WP_000550088.1">
    <property type="nucleotide sequence ID" value="NC_012659.1"/>
</dbReference>
<dbReference type="SMR" id="C3P5N1"/>
<dbReference type="GeneID" id="45023657"/>
<dbReference type="KEGG" id="bai:BAA_3990"/>
<dbReference type="HOGENOM" id="CLU_033123_0_0_9"/>
<dbReference type="GO" id="GO:0009376">
    <property type="term" value="C:HslUV protease complex"/>
    <property type="evidence" value="ECO:0007669"/>
    <property type="project" value="UniProtKB-UniRule"/>
</dbReference>
<dbReference type="GO" id="GO:0005524">
    <property type="term" value="F:ATP binding"/>
    <property type="evidence" value="ECO:0007669"/>
    <property type="project" value="UniProtKB-UniRule"/>
</dbReference>
<dbReference type="GO" id="GO:0016887">
    <property type="term" value="F:ATP hydrolysis activity"/>
    <property type="evidence" value="ECO:0007669"/>
    <property type="project" value="InterPro"/>
</dbReference>
<dbReference type="GO" id="GO:0008233">
    <property type="term" value="F:peptidase activity"/>
    <property type="evidence" value="ECO:0007669"/>
    <property type="project" value="InterPro"/>
</dbReference>
<dbReference type="GO" id="GO:0036402">
    <property type="term" value="F:proteasome-activating activity"/>
    <property type="evidence" value="ECO:0007669"/>
    <property type="project" value="UniProtKB-UniRule"/>
</dbReference>
<dbReference type="GO" id="GO:0043335">
    <property type="term" value="P:protein unfolding"/>
    <property type="evidence" value="ECO:0007669"/>
    <property type="project" value="UniProtKB-UniRule"/>
</dbReference>
<dbReference type="GO" id="GO:0051603">
    <property type="term" value="P:proteolysis involved in protein catabolic process"/>
    <property type="evidence" value="ECO:0007669"/>
    <property type="project" value="TreeGrafter"/>
</dbReference>
<dbReference type="CDD" id="cd19498">
    <property type="entry name" value="RecA-like_HslU"/>
    <property type="match status" value="1"/>
</dbReference>
<dbReference type="FunFam" id="3.40.50.300:FF:000220">
    <property type="entry name" value="ATP-dependent protease ATPase subunit HslU"/>
    <property type="match status" value="1"/>
</dbReference>
<dbReference type="Gene3D" id="1.10.8.60">
    <property type="match status" value="1"/>
</dbReference>
<dbReference type="Gene3D" id="1.10.8.10">
    <property type="entry name" value="DNA helicase RuvA subunit, C-terminal domain"/>
    <property type="match status" value="2"/>
</dbReference>
<dbReference type="Gene3D" id="3.40.50.300">
    <property type="entry name" value="P-loop containing nucleotide triphosphate hydrolases"/>
    <property type="match status" value="1"/>
</dbReference>
<dbReference type="HAMAP" id="MF_00249">
    <property type="entry name" value="HslU"/>
    <property type="match status" value="1"/>
</dbReference>
<dbReference type="InterPro" id="IPR003593">
    <property type="entry name" value="AAA+_ATPase"/>
</dbReference>
<dbReference type="InterPro" id="IPR050052">
    <property type="entry name" value="ATP-dep_Clp_protease_ClpX"/>
</dbReference>
<dbReference type="InterPro" id="IPR003959">
    <property type="entry name" value="ATPase_AAA_core"/>
</dbReference>
<dbReference type="InterPro" id="IPR019489">
    <property type="entry name" value="Clp_ATPase_C"/>
</dbReference>
<dbReference type="InterPro" id="IPR004491">
    <property type="entry name" value="HslU"/>
</dbReference>
<dbReference type="InterPro" id="IPR027417">
    <property type="entry name" value="P-loop_NTPase"/>
</dbReference>
<dbReference type="NCBIfam" id="TIGR00390">
    <property type="entry name" value="hslU"/>
    <property type="match status" value="1"/>
</dbReference>
<dbReference type="NCBIfam" id="NF003544">
    <property type="entry name" value="PRK05201.1"/>
    <property type="match status" value="1"/>
</dbReference>
<dbReference type="PANTHER" id="PTHR48102">
    <property type="entry name" value="ATP-DEPENDENT CLP PROTEASE ATP-BINDING SUBUNIT CLPX-LIKE, MITOCHONDRIAL-RELATED"/>
    <property type="match status" value="1"/>
</dbReference>
<dbReference type="PANTHER" id="PTHR48102:SF3">
    <property type="entry name" value="ATP-DEPENDENT PROTEASE ATPASE SUBUNIT HSLU"/>
    <property type="match status" value="1"/>
</dbReference>
<dbReference type="Pfam" id="PF00004">
    <property type="entry name" value="AAA"/>
    <property type="match status" value="1"/>
</dbReference>
<dbReference type="Pfam" id="PF07724">
    <property type="entry name" value="AAA_2"/>
    <property type="match status" value="1"/>
</dbReference>
<dbReference type="Pfam" id="PF10431">
    <property type="entry name" value="ClpB_D2-small"/>
    <property type="match status" value="1"/>
</dbReference>
<dbReference type="SMART" id="SM00382">
    <property type="entry name" value="AAA"/>
    <property type="match status" value="1"/>
</dbReference>
<dbReference type="SMART" id="SM01086">
    <property type="entry name" value="ClpB_D2-small"/>
    <property type="match status" value="1"/>
</dbReference>
<dbReference type="SUPFAM" id="SSF52540">
    <property type="entry name" value="P-loop containing nucleoside triphosphate hydrolases"/>
    <property type="match status" value="1"/>
</dbReference>
<proteinExistence type="inferred from homology"/>
<gene>
    <name evidence="1" type="primary">hslU</name>
    <name type="ordered locus">BAA_3990</name>
</gene>